<accession>Q74Z26</accession>
<dbReference type="EMBL" id="AE016820">
    <property type="protein sequence ID" value="AAS54870.1"/>
    <property type="molecule type" value="Genomic_DNA"/>
</dbReference>
<dbReference type="RefSeq" id="NP_987046.1">
    <property type="nucleotide sequence ID" value="NM_212108.1"/>
</dbReference>
<dbReference type="SMR" id="Q74Z26"/>
<dbReference type="FunCoup" id="Q74Z26">
    <property type="interactions" value="240"/>
</dbReference>
<dbReference type="STRING" id="284811.Q74Z26"/>
<dbReference type="EnsemblFungi" id="AAS54870">
    <property type="protein sequence ID" value="AAS54870"/>
    <property type="gene ID" value="AGOS_AGR380C"/>
</dbReference>
<dbReference type="GeneID" id="4623350"/>
<dbReference type="KEGG" id="ago:AGOS_AGR380C"/>
<dbReference type="eggNOG" id="ENOG502R1HB">
    <property type="taxonomic scope" value="Eukaryota"/>
</dbReference>
<dbReference type="HOGENOM" id="CLU_281615_0_0_1"/>
<dbReference type="InParanoid" id="Q74Z26"/>
<dbReference type="OMA" id="FTCFAQF"/>
<dbReference type="OrthoDB" id="5322661at2759"/>
<dbReference type="Proteomes" id="UP000000591">
    <property type="component" value="Chromosome VII"/>
</dbReference>
<dbReference type="GO" id="GO:0070847">
    <property type="term" value="C:core mediator complex"/>
    <property type="evidence" value="ECO:0007669"/>
    <property type="project" value="EnsemblFungi"/>
</dbReference>
<dbReference type="GO" id="GO:0016592">
    <property type="term" value="C:mediator complex"/>
    <property type="evidence" value="ECO:0000318"/>
    <property type="project" value="GO_Central"/>
</dbReference>
<dbReference type="GO" id="GO:0003712">
    <property type="term" value="F:transcription coregulator activity"/>
    <property type="evidence" value="ECO:0007669"/>
    <property type="project" value="InterPro"/>
</dbReference>
<dbReference type="GO" id="GO:0032968">
    <property type="term" value="P:positive regulation of transcription elongation by RNA polymerase II"/>
    <property type="evidence" value="ECO:0007669"/>
    <property type="project" value="EnsemblFungi"/>
</dbReference>
<dbReference type="GO" id="GO:0060261">
    <property type="term" value="P:positive regulation of transcription initiation by RNA polymerase II"/>
    <property type="evidence" value="ECO:0007669"/>
    <property type="project" value="EnsemblFungi"/>
</dbReference>
<dbReference type="GO" id="GO:0006357">
    <property type="term" value="P:regulation of transcription by RNA polymerase II"/>
    <property type="evidence" value="ECO:0000318"/>
    <property type="project" value="GO_Central"/>
</dbReference>
<dbReference type="GO" id="GO:0051123">
    <property type="term" value="P:RNA polymerase II preinitiation complex assembly"/>
    <property type="evidence" value="ECO:0007669"/>
    <property type="project" value="EnsemblFungi"/>
</dbReference>
<dbReference type="InterPro" id="IPR014801">
    <property type="entry name" value="Mediator_Med5_fun"/>
</dbReference>
<dbReference type="PANTHER" id="PTHR35784">
    <property type="entry name" value="MEDIATOR OF RNA POLYMERASE II TRANSCRIPTION SUBUNIT 5"/>
    <property type="match status" value="1"/>
</dbReference>
<dbReference type="PANTHER" id="PTHR35784:SF1">
    <property type="entry name" value="MEDIATOR OF RNA POLYMERASE II TRANSCRIPTION SUBUNIT 5"/>
    <property type="match status" value="1"/>
</dbReference>
<dbReference type="Pfam" id="PF08689">
    <property type="entry name" value="Med5"/>
    <property type="match status" value="1"/>
</dbReference>
<protein>
    <recommendedName>
        <fullName>Mediator of RNA polymerase II transcription subunit 5</fullName>
    </recommendedName>
    <alternativeName>
        <fullName>Mediator complex subunit 5</fullName>
    </alternativeName>
</protein>
<comment type="function">
    <text evidence="1">Component of the Mediator complex, a coactivator involved in the regulated transcription of nearly all RNA polymerase II-dependent genes. Mediator functions as a bridge to convey information from gene-specific regulatory proteins to the basal RNA polymerase II transcription machinery. Mediator is recruited to promoters by direct interactions with regulatory proteins and serves as a scaffold for the assembly of a functional preinitiation complex with RNA polymerase II and the general transcription factors (By similarity).</text>
</comment>
<comment type="subunit">
    <text evidence="1">Component of the Mediator complex.</text>
</comment>
<comment type="subcellular location">
    <subcellularLocation>
        <location evidence="1">Nucleus</location>
    </subcellularLocation>
</comment>
<comment type="similarity">
    <text evidence="3">Belongs to the Mediator complex subunit 5 family.</text>
</comment>
<proteinExistence type="inferred from homology"/>
<evidence type="ECO:0000250" key="1"/>
<evidence type="ECO:0000256" key="2">
    <source>
        <dbReference type="SAM" id="MobiDB-lite"/>
    </source>
</evidence>
<evidence type="ECO:0000305" key="3"/>
<name>MED5_EREGS</name>
<sequence>MVRAQETVYDLITKCSVRRVPPKQFVNFYNEFFNERYDSVLENGNPAGESRPTAPVYEEVAQDLVRILNDSRVNLVADYVLEIVLINLNVDLLRLFLPKLHHVRNVMLLVHLFSRATAFISGLDNKLLAEQISDTVYTDVTPAVLSFNMQAIDDQLVIVLAKFLHAVLRLPEGQQKMGSVPTKQKAATLLQRLSTIDRLLYKRFIADLDGKLRLSGAPADMSFPLPPSNMPSPSVTSPKYETSSVGVMKRSTSMSNEAKYQDIKLARYYKNLWLNNKIHYCTVSDPLFLEKYDSILELATGGGLSADRPVKAKIADLVETAFTCFAQFVSNKLYHQSNSNFSLLERKWTVFVTKQLPLIIKSSIPDKTDIVLRTLENIDDKVIKAIKSYNTEKEEVKNRTEDLFDDYPVNSLDIRHEFLKNLIMMGLQPPTVLNEYLREDQMVDLKSLVTSEHLIIDNSQGVRETILNVRNFITKSIESLEFENLFDDGNQLLVTNDHGIIQIAHNLETISPTKQLEIANILYDLLSAAIESLDHKTISKVLTILTLNVGHLLTNIFCLTGYEKFARAVIRFIDVIWESNKSKSNDMVSDDSEFENINSAMAYTLSLCFIIHVVDIYGVNVEALVENPSKSTVLRFLSKLGEIPEVFVAPEGDLESSKTLLQQWLRELFVKNLISDNLMKSADVKVMGFMIPFIFKQTLLNVEYGIISDISSFVNGFEYFLQPFLSVGLINIVFWLEKYLLALKTTESFPKINGALFDILGAIIAPKSIGSDAKAIHSVVLKLKCVGLLKELKSFQVPSESNYGIYSSQTRQDPRLEALISKLELIAQSSALYDVDPRIISAVNNNYSQKHISYNKVVLTSDIPINKIMTNQINSFWNLHSSTYYNFDYLLELIDLVTPFKFVQDVFQTLKYKVTAYGVPGSATKPSSAALDQVLGYVFYFMVLRDIKCPEEKSLLLEYLDSGRFPSSISATVLTSDPTTISGMPPVSMPYDVKSEQDAMEGVDEDFDMLFGESFSGLPDDVQKSADMKPDTGIKEDDSEKSSYVSAARLTESFGVIFSKMKKDKLEAYQAGQISEERYQCFMGLYDKYVQTLRHSVI</sequence>
<feature type="chain" id="PRO_0000302766" description="Mediator of RNA polymerase II transcription subunit 5">
    <location>
        <begin position="1"/>
        <end position="1098"/>
    </location>
</feature>
<feature type="region of interest" description="Disordered" evidence="2">
    <location>
        <begin position="1019"/>
        <end position="1041"/>
    </location>
</feature>
<feature type="compositionally biased region" description="Basic and acidic residues" evidence="2">
    <location>
        <begin position="1021"/>
        <end position="1041"/>
    </location>
</feature>
<organism>
    <name type="scientific">Eremothecium gossypii (strain ATCC 10895 / CBS 109.51 / FGSC 9923 / NRRL Y-1056)</name>
    <name type="common">Yeast</name>
    <name type="synonym">Ashbya gossypii</name>
    <dbReference type="NCBI Taxonomy" id="284811"/>
    <lineage>
        <taxon>Eukaryota</taxon>
        <taxon>Fungi</taxon>
        <taxon>Dikarya</taxon>
        <taxon>Ascomycota</taxon>
        <taxon>Saccharomycotina</taxon>
        <taxon>Saccharomycetes</taxon>
        <taxon>Saccharomycetales</taxon>
        <taxon>Saccharomycetaceae</taxon>
        <taxon>Eremothecium</taxon>
    </lineage>
</organism>
<gene>
    <name type="primary">NUT1</name>
    <name type="synonym">MED5</name>
    <name type="ordered locus">AGR380C</name>
</gene>
<reference key="1">
    <citation type="journal article" date="2004" name="Science">
        <title>The Ashbya gossypii genome as a tool for mapping the ancient Saccharomyces cerevisiae genome.</title>
        <authorList>
            <person name="Dietrich F.S."/>
            <person name="Voegeli S."/>
            <person name="Brachat S."/>
            <person name="Lerch A."/>
            <person name="Gates K."/>
            <person name="Steiner S."/>
            <person name="Mohr C."/>
            <person name="Poehlmann R."/>
            <person name="Luedi P."/>
            <person name="Choi S."/>
            <person name="Wing R.A."/>
            <person name="Flavier A."/>
            <person name="Gaffney T.D."/>
            <person name="Philippsen P."/>
        </authorList>
    </citation>
    <scope>NUCLEOTIDE SEQUENCE [LARGE SCALE GENOMIC DNA]</scope>
    <source>
        <strain>ATCC 10895 / CBS 109.51 / FGSC 9923 / NRRL Y-1056</strain>
    </source>
</reference>
<reference key="2">
    <citation type="journal article" date="2013" name="G3 (Bethesda)">
        <title>Genomes of Ashbya fungi isolated from insects reveal four mating-type loci, numerous translocations, lack of transposons, and distinct gene duplications.</title>
        <authorList>
            <person name="Dietrich F.S."/>
            <person name="Voegeli S."/>
            <person name="Kuo S."/>
            <person name="Philippsen P."/>
        </authorList>
    </citation>
    <scope>GENOME REANNOTATION</scope>
    <source>
        <strain>ATCC 10895 / CBS 109.51 / FGSC 9923 / NRRL Y-1056</strain>
    </source>
</reference>
<keyword id="KW-0010">Activator</keyword>
<keyword id="KW-0539">Nucleus</keyword>
<keyword id="KW-1185">Reference proteome</keyword>
<keyword id="KW-0804">Transcription</keyword>
<keyword id="KW-0805">Transcription regulation</keyword>